<evidence type="ECO:0000255" key="1">
    <source>
        <dbReference type="PROSITE-ProRule" id="PRU00048"/>
    </source>
</evidence>
<evidence type="ECO:0000256" key="2">
    <source>
        <dbReference type="SAM" id="MobiDB-lite"/>
    </source>
</evidence>
<evidence type="ECO:0000269" key="3">
    <source>
    </source>
</evidence>
<evidence type="ECO:0000269" key="4">
    <source>
    </source>
</evidence>
<evidence type="ECO:0000269" key="5">
    <source>
    </source>
</evidence>
<evidence type="ECO:0000303" key="6">
    <source>
    </source>
</evidence>
<evidence type="ECO:0000305" key="7"/>
<evidence type="ECO:0000305" key="8">
    <source>
    </source>
</evidence>
<evidence type="ECO:0000305" key="9">
    <source>
    </source>
</evidence>
<evidence type="ECO:0007744" key="10">
    <source>
        <dbReference type="PDB" id="4F88"/>
    </source>
</evidence>
<evidence type="ECO:0007829" key="11">
    <source>
        <dbReference type="PDB" id="4F88"/>
    </source>
</evidence>
<accession>Q7Y3F1</accession>
<gene>
    <name type="primary">orf11</name>
</gene>
<proteinExistence type="evidence at protein level"/>
<dbReference type="EC" id="3.2.1.-" evidence="5"/>
<dbReference type="EC" id="3.5.1.28" evidence="4"/>
<dbReference type="EMBL" id="AY212251">
    <property type="protein sequence ID" value="AAP42310.2"/>
    <property type="molecule type" value="Genomic_DNA"/>
</dbReference>
<dbReference type="RefSeq" id="NP_852017.2">
    <property type="nucleotide sequence ID" value="NC_004814.1"/>
</dbReference>
<dbReference type="PDB" id="4F88">
    <property type="method" value="X-ray"/>
    <property type="resolution" value="3.30 A"/>
    <property type="chains" value="1/2=1-465"/>
</dbReference>
<dbReference type="PDBsum" id="4F88"/>
<dbReference type="SMR" id="Q7Y3F1"/>
<dbReference type="DIP" id="DIP-60064N"/>
<dbReference type="IntAct" id="Q7Y3F1">
    <property type="interactions" value="1"/>
</dbReference>
<dbReference type="GeneID" id="1489936"/>
<dbReference type="KEGG" id="vg:1489936"/>
<dbReference type="OrthoDB" id="7521at10239"/>
<dbReference type="EvolutionaryTrace" id="Q7Y3F1"/>
<dbReference type="Proteomes" id="UP000001773">
    <property type="component" value="Genome"/>
</dbReference>
<dbReference type="GO" id="GO:0016787">
    <property type="term" value="F:hydrolase activity"/>
    <property type="evidence" value="ECO:0007669"/>
    <property type="project" value="UniProtKB-KW"/>
</dbReference>
<dbReference type="GO" id="GO:0031640">
    <property type="term" value="P:killing of cells of another organism"/>
    <property type="evidence" value="ECO:0007669"/>
    <property type="project" value="UniProtKB-KW"/>
</dbReference>
<dbReference type="Gene3D" id="3.90.1720.60">
    <property type="match status" value="1"/>
</dbReference>
<dbReference type="InterPro" id="IPR007921">
    <property type="entry name" value="CHAP_dom"/>
</dbReference>
<dbReference type="InterPro" id="IPR048974">
    <property type="entry name" value="PlyCA_N"/>
</dbReference>
<dbReference type="Pfam" id="PF05257">
    <property type="entry name" value="CHAP"/>
    <property type="match status" value="1"/>
</dbReference>
<dbReference type="Pfam" id="PF21480">
    <property type="entry name" value="PlyCA_N"/>
    <property type="match status" value="1"/>
</dbReference>
<dbReference type="PROSITE" id="PS50911">
    <property type="entry name" value="CHAP"/>
    <property type="match status" value="1"/>
</dbReference>
<keyword id="KW-0002">3D-structure</keyword>
<keyword id="KW-0929">Antimicrobial</keyword>
<keyword id="KW-0204">Cytolysis</keyword>
<keyword id="KW-0903">Direct protein sequencing</keyword>
<keyword id="KW-0578">Host cell lysis by virus</keyword>
<keyword id="KW-0378">Hydrolase</keyword>
<keyword id="KW-1185">Reference proteome</keyword>
<keyword id="KW-1188">Viral release from host cell</keyword>
<sequence length="465" mass="50497">MSKKYTQQQYEKYLAQPANNTFGLSPQQVADWFMGQAGARPVINSYGVNASNLVSTYIPKMQEYGVSYTLFLMYTVFEGGGAGNWINHYMYDTGSNGLECLEHDLQYIHGVWETYFPPALSAPECYPATEDNAGALDRFYQSLPGRTWGDVMIPSTMAGNAWVWAYNYCVNNQGAAPLVYFGNPYDSQIDSLLAMGADPFTGGSITGDGKNPSVGTGNATVSASSEANREKLKKALTDLFNNNLEHLSGEFYGNQVLNAMKYGTILKCDLTDDGLNAILQLIADVNLQTNPNPDKPTVQSPGQNDLGSGSDRVAANLANAQAQVGKYIGDGQCYAWVGWWSARVCGYSISYSTGDPMLPLIGDGMNAHSIHLGWDWSIANTGIVNYPVGTVGRKEDLRVGAIWCATAFSGAPFYTGQYGHTGIIESWSDTTVTVLEQNILGSPVIRSTYDLNTFLSTLTGLITFK</sequence>
<organism>
    <name type="scientific">Streptococcus phage C1</name>
    <dbReference type="NCBI Taxonomy" id="2907838"/>
    <lineage>
        <taxon>Viruses</taxon>
        <taxon>Duplodnaviria</taxon>
        <taxon>Heunggongvirae</taxon>
        <taxon>Uroviricota</taxon>
        <taxon>Caudoviricetes</taxon>
        <taxon>Rountreeviridae</taxon>
        <taxon>Fischettivirus</taxon>
        <taxon>Fischettivirus C1</taxon>
    </lineage>
</organism>
<feature type="initiator methionine" description="Removed" evidence="8">
    <location>
        <position position="1"/>
    </location>
</feature>
<feature type="chain" id="PRO_0000459236" description="Endolysin PlyC, large catalytic subunit">
    <location>
        <begin position="2"/>
        <end position="465"/>
    </location>
</feature>
<feature type="domain" description="Peptidase C51" evidence="1">
    <location>
        <begin position="308"/>
        <end position="465"/>
    </location>
</feature>
<feature type="region of interest" description="Glycosidase activity" evidence="5">
    <location>
        <begin position="2"/>
        <end position="205"/>
    </location>
</feature>
<feature type="region of interest" description="Disordered" evidence="2">
    <location>
        <begin position="204"/>
        <end position="226"/>
    </location>
</feature>
<feature type="region of interest" description="Disordered" evidence="2">
    <location>
        <begin position="289"/>
        <end position="309"/>
    </location>
</feature>
<feature type="compositionally biased region" description="Polar residues" evidence="2">
    <location>
        <begin position="213"/>
        <end position="226"/>
    </location>
</feature>
<feature type="compositionally biased region" description="Polar residues" evidence="2">
    <location>
        <begin position="289"/>
        <end position="307"/>
    </location>
</feature>
<feature type="active site" description="For amidase activity" evidence="4">
    <location>
        <position position="333"/>
    </location>
</feature>
<feature type="active site" description="For amidase activity" evidence="4">
    <location>
        <position position="420"/>
    </location>
</feature>
<feature type="mutagenesis site" description="Complete loss of glycosyl hydrolase activity." evidence="9">
    <original>E</original>
    <variation>A</variation>
    <location>
        <position position="78"/>
    </location>
</feature>
<feature type="mutagenesis site" description="Almost complete loss of glycosyl hydrolase activity." evidence="9">
    <original>N</original>
    <variation>A</variation>
    <location>
        <position position="87"/>
    </location>
</feature>
<feature type="mutagenesis site" description="Almost complete loss of glycosyl hydrolase activity." evidence="9">
    <original>H</original>
    <variation>A</variation>
    <location>
        <position position="88"/>
    </location>
</feature>
<feature type="mutagenesis site" description="Complete loss of glycosyl hydrolase activity." evidence="9">
    <original>D</original>
    <variation>A</variation>
    <location>
        <position position="104"/>
    </location>
</feature>
<feature type="mutagenesis site" description="No effect on amidase activity." evidence="4">
    <original>C</original>
    <variation>S</variation>
    <location>
        <position position="268"/>
    </location>
</feature>
<feature type="mutagenesis site" description="Complete loss of amidase activity." evidence="4">
    <original>C</original>
    <variation>S</variation>
    <location>
        <position position="333"/>
    </location>
</feature>
<feature type="mutagenesis site" description="No effect on amidase activity." evidence="4">
    <original>C</original>
    <variation>S</variation>
    <location>
        <position position="345"/>
    </location>
</feature>
<feature type="mutagenesis site" description="No effect on amidase activity." evidence="4">
    <original>C</original>
    <variation>S</variation>
    <location>
        <position position="404"/>
    </location>
</feature>
<feature type="mutagenesis site" description="Complete loss of amidase activity." evidence="4">
    <original>H</original>
    <variation>A</variation>
    <location>
        <position position="420"/>
    </location>
</feature>
<feature type="helix" evidence="11">
    <location>
        <begin position="7"/>
        <end position="14"/>
    </location>
</feature>
<feature type="strand" evidence="11">
    <location>
        <begin position="17"/>
        <end position="19"/>
    </location>
</feature>
<feature type="helix" evidence="11">
    <location>
        <begin position="27"/>
        <end position="35"/>
    </location>
</feature>
<feature type="helix" evidence="11">
    <location>
        <begin position="40"/>
        <end position="44"/>
    </location>
</feature>
<feature type="turn" evidence="11">
    <location>
        <begin position="45"/>
        <end position="47"/>
    </location>
</feature>
<feature type="helix" evidence="11">
    <location>
        <begin position="50"/>
        <end position="63"/>
    </location>
</feature>
<feature type="helix" evidence="11">
    <location>
        <begin position="68"/>
        <end position="77"/>
    </location>
</feature>
<feature type="strand" evidence="11">
    <location>
        <begin position="86"/>
        <end position="89"/>
    </location>
</feature>
<feature type="helix" evidence="11">
    <location>
        <begin position="97"/>
        <end position="109"/>
    </location>
</feature>
<feature type="strand" evidence="11">
    <location>
        <begin position="112"/>
        <end position="115"/>
    </location>
</feature>
<feature type="helix" evidence="11">
    <location>
        <begin position="135"/>
        <end position="142"/>
    </location>
</feature>
<feature type="strand" evidence="11">
    <location>
        <begin position="145"/>
        <end position="147"/>
    </location>
</feature>
<feature type="helix" evidence="11">
    <location>
        <begin position="148"/>
        <end position="155"/>
    </location>
</feature>
<feature type="helix" evidence="11">
    <location>
        <begin position="157"/>
        <end position="163"/>
    </location>
</feature>
<feature type="helix" evidence="11">
    <location>
        <begin position="166"/>
        <end position="171"/>
    </location>
</feature>
<feature type="strand" evidence="11">
    <location>
        <begin position="175"/>
        <end position="178"/>
    </location>
</feature>
<feature type="helix" evidence="11">
    <location>
        <begin position="184"/>
        <end position="193"/>
    </location>
</feature>
<feature type="helix" evidence="11">
    <location>
        <begin position="201"/>
        <end position="204"/>
    </location>
</feature>
<feature type="helix" evidence="11">
    <location>
        <begin position="229"/>
        <end position="242"/>
    </location>
</feature>
<feature type="turn" evidence="11">
    <location>
        <begin position="243"/>
        <end position="247"/>
    </location>
</feature>
<feature type="helix" evidence="11">
    <location>
        <begin position="251"/>
        <end position="257"/>
    </location>
</feature>
<feature type="helix" evidence="11">
    <location>
        <begin position="272"/>
        <end position="287"/>
    </location>
</feature>
<feature type="helix" evidence="11">
    <location>
        <begin position="311"/>
        <end position="321"/>
    </location>
</feature>
<feature type="turn" evidence="11">
    <location>
        <begin position="322"/>
        <end position="325"/>
    </location>
</feature>
<feature type="strand" evidence="11">
    <location>
        <begin position="329"/>
        <end position="332"/>
    </location>
</feature>
<feature type="helix" evidence="11">
    <location>
        <begin position="333"/>
        <end position="344"/>
    </location>
</feature>
<feature type="strand" evidence="11">
    <location>
        <begin position="348"/>
        <end position="350"/>
    </location>
</feature>
<feature type="turn" evidence="11">
    <location>
        <begin position="351"/>
        <end position="353"/>
    </location>
</feature>
<feature type="strand" evidence="11">
    <location>
        <begin position="365"/>
        <end position="368"/>
    </location>
</feature>
<feature type="strand" evidence="11">
    <location>
        <begin position="370"/>
        <end position="374"/>
    </location>
</feature>
<feature type="strand" evidence="11">
    <location>
        <begin position="402"/>
        <end position="405"/>
    </location>
</feature>
<feature type="turn" evidence="11">
    <location>
        <begin position="411"/>
        <end position="413"/>
    </location>
</feature>
<feature type="strand" evidence="11">
    <location>
        <begin position="421"/>
        <end position="427"/>
    </location>
</feature>
<feature type="strand" evidence="11">
    <location>
        <begin position="429"/>
        <end position="437"/>
    </location>
</feature>
<feature type="strand" evidence="11">
    <location>
        <begin position="439"/>
        <end position="441"/>
    </location>
</feature>
<feature type="strand" evidence="11">
    <location>
        <begin position="445"/>
        <end position="450"/>
    </location>
</feature>
<feature type="helix" evidence="11">
    <location>
        <begin position="451"/>
        <end position="457"/>
    </location>
</feature>
<feature type="strand" evidence="11">
    <location>
        <begin position="458"/>
        <end position="462"/>
    </location>
</feature>
<comment type="function">
    <text evidence="3 4 8 9">Component of the endolysin PlyC that degrades the host peptidoglycans and participates with the holin protein in the sequential events which lead to the programmed host cell lysis releasing the mature viral particles (Probable). Once the holin has permeabilized the host cell membrane, the endolysin can reach the periplasm and breaking down the peptidoglycan layer (Probable). When associated with the small subunit PlyCB, the large subunit PlyCA displays 2 catalytic activities, amidase and glycosyl hydrolase (PubMed:16818874). Cleaves the amide bond between N-acetyl muramic acid and L-alanine in the host peptidoglycan (PubMed:16818874). PlyC is an extremely potent endolysin (PubMed:11259652).</text>
</comment>
<comment type="catalytic activity">
    <reaction evidence="4">
        <text>Hydrolyzes the link between N-acetylmuramoyl residues and L-amino acid residues in certain cell-wall glycopeptides.</text>
        <dbReference type="EC" id="3.5.1.28"/>
    </reaction>
</comment>
<comment type="subunit">
    <text evidence="4 5">Part of the PlyC holoenzyme, which is composed of 1 PlyCA and 8 PlyCB assembled as a ring.</text>
</comment>
<comment type="interaction">
    <interactant intactId="EBI-15590339">
        <id>Q7Y3F1</id>
    </interactant>
    <interactant intactId="EBI-15590349">
        <id>Q7Y3F3</id>
        <label>orf9dod</label>
    </interactant>
    <organismsDiffer>false</organismsDiffer>
    <experiments>4</experiments>
</comment>
<comment type="domain">
    <text evidence="5">Contains two catalytic domains, a glycosyl hydrolase domain in the N-terminus and a cysteine, histidine-dependent amidohydrolases/peptidases (CHAP) domain associated with the amidase activity in the C-terminus.</text>
</comment>
<comment type="miscellaneous">
    <text evidence="4">Part of plyC operon, which contains plyCA, lil and plyCB genes.</text>
</comment>
<reference key="1">
    <citation type="journal article" date="2003" name="J. Bacteriol.">
        <title>Genomic sequence of C1, the first streptococcal phage.</title>
        <authorList>
            <person name="Nelson D."/>
            <person name="Schuch R."/>
            <person name="Zhu S."/>
            <person name="Tscherne D.M."/>
            <person name="Fischetti V.A."/>
        </authorList>
    </citation>
    <scope>NUCLEOTIDE SEQUENCE [GENOMIC DNA]</scope>
</reference>
<reference key="2">
    <citation type="journal article" date="2006" name="Proc. Natl. Acad. Sci. U.S.A.">
        <title>PlyC: a multimeric bacteriophage lysin.</title>
        <authorList>
            <person name="Nelson D."/>
            <person name="Schuch R."/>
            <person name="Chahales P."/>
            <person name="Zhu S."/>
            <person name="Fischetti V.A."/>
        </authorList>
    </citation>
    <scope>NUCLEOTIDE SEQUENCE [LARGE SCALE GENOMIC DNA]</scope>
    <scope>PROTEIN SEQUENCE OF 1-11</scope>
    <scope>FUNCTION</scope>
    <scope>SUBUNIT</scope>
    <scope>MUTAGENESIS OF CYS-268; CYS-333; CYS-345; CYS-404 AND HIS-420</scope>
    <scope>ACTIVE SITE</scope>
    <scope>IDENTIFICATION IN A COMPLEX WITH PLYCB</scope>
</reference>
<reference key="3">
    <citation type="journal article" date="2001" name="Proc. Natl. Acad. Sci. U.S.A.">
        <title>Prevention and elimination of upper respiratory colonization of mice by group A streptococci by using a bacteriophage lytic enzyme.</title>
        <authorList>
            <person name="Nelson D."/>
            <person name="Loomis L."/>
            <person name="Fischetti V.A."/>
        </authorList>
    </citation>
    <scope>FUNCTION</scope>
</reference>
<reference evidence="10" key="4">
    <citation type="journal article" date="2012" name="Proc. Natl. Acad. Sci. U.S.A.">
        <title>X-ray crystal structure of the streptococcal specific phage lysin PlyC.</title>
        <authorList>
            <person name="McGowan S."/>
            <person name="Buckle A.M."/>
            <person name="Mitchell M.S."/>
            <person name="Hoopes J.T."/>
            <person name="Gallagher D.T."/>
            <person name="Heselpoth R.D."/>
            <person name="Shen Y."/>
            <person name="Reboul C.F."/>
            <person name="Law R.H."/>
            <person name="Fischetti V.A."/>
            <person name="Whisstock J.C."/>
            <person name="Nelson D.C."/>
        </authorList>
    </citation>
    <scope>X-RAY CRYSTALLOGRAPHY (3.30 ANGSTROMS)</scope>
    <scope>SUBUNIT</scope>
    <scope>DOMAIN</scope>
    <scope>IDENTIFICATION IN A COMPLEX WITH PLYCB</scope>
    <scope>MUTAGENESIS OF GLU-78; ASN-87; HIS-88 AND ASP-104</scope>
    <scope>FUNCTION</scope>
</reference>
<protein>
    <recommendedName>
        <fullName evidence="7">Endolysin PlyC, large catalytic subunit</fullName>
        <shortName evidence="6">PlyCA</shortName>
        <ecNumber evidence="5">3.2.1.-</ecNumber>
        <ecNumber evidence="4">3.5.1.28</ecNumber>
    </recommendedName>
</protein>
<name>PLYCA_BPSC1</name>